<name>NDRG3_XENLA</name>
<protein>
    <recommendedName>
        <fullName>Protein NDRG3</fullName>
    </recommendedName>
</protein>
<organism>
    <name type="scientific">Xenopus laevis</name>
    <name type="common">African clawed frog</name>
    <dbReference type="NCBI Taxonomy" id="8355"/>
    <lineage>
        <taxon>Eukaryota</taxon>
        <taxon>Metazoa</taxon>
        <taxon>Chordata</taxon>
        <taxon>Craniata</taxon>
        <taxon>Vertebrata</taxon>
        <taxon>Euteleostomi</taxon>
        <taxon>Amphibia</taxon>
        <taxon>Batrachia</taxon>
        <taxon>Anura</taxon>
        <taxon>Pipoidea</taxon>
        <taxon>Pipidae</taxon>
        <taxon>Xenopodinae</taxon>
        <taxon>Xenopus</taxon>
        <taxon>Xenopus</taxon>
    </lineage>
</organism>
<proteinExistence type="evidence at transcript level"/>
<comment type="similarity">
    <text evidence="2">Belongs to the NDRG family.</text>
</comment>
<accession>Q6GQL1</accession>
<gene>
    <name evidence="1" type="primary">ndrg3</name>
</gene>
<reference evidence="4" key="1">
    <citation type="submission" date="2004-06" db="EMBL/GenBank/DDBJ databases">
        <authorList>
            <consortium name="NIH - Xenopus Gene Collection (XGC) project"/>
        </authorList>
    </citation>
    <scope>NUCLEOTIDE SEQUENCE [LARGE SCALE MRNA]</scope>
    <source>
        <tissue evidence="4">Spleen</tissue>
    </source>
</reference>
<sequence>MEELQDVQLTEIKPLLTDKDPGQHFEDFDGQEHDIETALGVVHVTMSGNTRGNRPVLLTYHDIGLNHKSCFNSFFNFDDMHEITQHFAVCHIDAPGQQQGAPSFPTGYQYPTMDELAEMLTAVLTHLNLRSIIGIGVGAGAYVLSRFALNNPLLVEGLVLLNIDPCAKGWIDWAASKLSFWTTNVVEVVLGHLFGYEELQSSLDLVQTFRLHIAQDINQDNLELFVNSYNSRKDLEIERPVFGSSTPTNTTIKCPVLLVVGDNSPAVDAVVECNSRLDPTRTTLLKMADCGGLPQVVQPGKLAEAIKYFVQGMGYMPSASMTRLVRSRTHSASSSGSMEIPRSRSHTSNAQLKSSSNNSLSNQIQETPQTIELSC</sequence>
<feature type="chain" id="PRO_0000232430" description="Protein NDRG3">
    <location>
        <begin position="1"/>
        <end position="375"/>
    </location>
</feature>
<feature type="region of interest" description="Disordered" evidence="3">
    <location>
        <begin position="326"/>
        <end position="375"/>
    </location>
</feature>
<feature type="compositionally biased region" description="Low complexity" evidence="3">
    <location>
        <begin position="348"/>
        <end position="363"/>
    </location>
</feature>
<feature type="compositionally biased region" description="Polar residues" evidence="3">
    <location>
        <begin position="364"/>
        <end position="375"/>
    </location>
</feature>
<dbReference type="EMBL" id="BC072731">
    <property type="protein sequence ID" value="AAH72731.1"/>
    <property type="molecule type" value="mRNA"/>
</dbReference>
<dbReference type="RefSeq" id="NP_001085427.1">
    <property type="nucleotide sequence ID" value="NM_001091958.1"/>
</dbReference>
<dbReference type="SMR" id="Q6GQL1"/>
<dbReference type="BioGRID" id="102016">
    <property type="interactions" value="1"/>
</dbReference>
<dbReference type="ESTHER" id="xenla-ndrg3">
    <property type="family name" value="Ndr_family"/>
</dbReference>
<dbReference type="DNASU" id="443853"/>
<dbReference type="GeneID" id="443853"/>
<dbReference type="KEGG" id="xla:443853"/>
<dbReference type="AGR" id="Xenbase:XB-GENE-6078876"/>
<dbReference type="CTD" id="443853"/>
<dbReference type="Xenbase" id="XB-GENE-6078876">
    <property type="gene designation" value="ndrg3.S"/>
</dbReference>
<dbReference type="OrthoDB" id="741027at2759"/>
<dbReference type="Proteomes" id="UP000186698">
    <property type="component" value="Chromosome 9_10S"/>
</dbReference>
<dbReference type="Bgee" id="443853">
    <property type="expression patterns" value="Expressed in testis and 19 other cell types or tissues"/>
</dbReference>
<dbReference type="GO" id="GO:0005737">
    <property type="term" value="C:cytoplasm"/>
    <property type="evidence" value="ECO:0000318"/>
    <property type="project" value="GO_Central"/>
</dbReference>
<dbReference type="GO" id="GO:0007165">
    <property type="term" value="P:signal transduction"/>
    <property type="evidence" value="ECO:0000318"/>
    <property type="project" value="GO_Central"/>
</dbReference>
<dbReference type="FunFam" id="3.40.50.1820:FF:000006">
    <property type="entry name" value="NDRG family member 3"/>
    <property type="match status" value="1"/>
</dbReference>
<dbReference type="Gene3D" id="3.40.50.1820">
    <property type="entry name" value="alpha/beta hydrolase"/>
    <property type="match status" value="1"/>
</dbReference>
<dbReference type="InterPro" id="IPR029058">
    <property type="entry name" value="AB_hydrolase_fold"/>
</dbReference>
<dbReference type="InterPro" id="IPR004142">
    <property type="entry name" value="NDRG"/>
</dbReference>
<dbReference type="PANTHER" id="PTHR11034">
    <property type="entry name" value="N-MYC DOWNSTREAM REGULATED"/>
    <property type="match status" value="1"/>
</dbReference>
<dbReference type="Pfam" id="PF03096">
    <property type="entry name" value="Ndr"/>
    <property type="match status" value="1"/>
</dbReference>
<dbReference type="SUPFAM" id="SSF53474">
    <property type="entry name" value="alpha/beta-Hydrolases"/>
    <property type="match status" value="1"/>
</dbReference>
<keyword id="KW-1185">Reference proteome</keyword>
<evidence type="ECO:0000250" key="1">
    <source>
        <dbReference type="UniProtKB" id="Q6DFS4"/>
    </source>
</evidence>
<evidence type="ECO:0000255" key="2"/>
<evidence type="ECO:0000256" key="3">
    <source>
        <dbReference type="SAM" id="MobiDB-lite"/>
    </source>
</evidence>
<evidence type="ECO:0000312" key="4">
    <source>
        <dbReference type="EMBL" id="AAH72731.1"/>
    </source>
</evidence>